<organismHost>
    <name type="scientific">Vertebrata</name>
    <dbReference type="NCBI Taxonomy" id="7742"/>
</organismHost>
<name>V012_FOWPN</name>
<feature type="chain" id="PRO_0000067102" description="Putative ankyrin repeat protein FPV012">
    <location>
        <begin position="1"/>
        <end position="331"/>
    </location>
</feature>
<feature type="repeat" description="ANK 1">
    <location>
        <begin position="11"/>
        <end position="40"/>
    </location>
</feature>
<feature type="repeat" description="ANK 2">
    <location>
        <begin position="44"/>
        <end position="73"/>
    </location>
</feature>
<feature type="repeat" description="ANK 3">
    <location>
        <begin position="77"/>
        <end position="106"/>
    </location>
</feature>
<feature type="repeat" description="ANK 4">
    <location>
        <begin position="110"/>
        <end position="139"/>
    </location>
</feature>
<accession>Q9J5I9</accession>
<proteinExistence type="predicted"/>
<reference key="1">
    <citation type="journal article" date="2000" name="J. Virol.">
        <title>The genome of fowlpox virus.</title>
        <authorList>
            <person name="Afonso C.L."/>
            <person name="Tulman E.R."/>
            <person name="Lu Z."/>
            <person name="Zsak L."/>
            <person name="Kutish G.F."/>
            <person name="Rock D.L."/>
        </authorList>
    </citation>
    <scope>NUCLEOTIDE SEQUENCE [LARGE SCALE GENOMIC DNA]</scope>
</reference>
<sequence length="331" mass="37301">MDTEMDGVNNDGYTSLYKETAKGNIKKVVELLYKGVNPNTPNVDSYTPLHIAAKTGNIKIIRRLIRYGANVDKETNDGYTALLIAICTGDIKTCNVLLDEGANPNYVNKYGITPLVRIISYYRPTILKLLMDRGANCNQIINIGQVTYTIMEYFINLFDEYKIPILNLVPYIIISKFKASITVNIEGFNRNIAAIAKNSRLLEVALKCKSEIAFMTTRGIGDKSLFEICILEDIKDIDHNSFVAFLDKLIESQSNLRIYGYTMNKIIEMGRYRKELLCSAVRVNSCNLSSLNTEWCLLPLKGKLNILSKLNNDNIKKLILNDAIKVNNKTG</sequence>
<protein>
    <recommendedName>
        <fullName>Putative ankyrin repeat protein FPV012</fullName>
    </recommendedName>
</protein>
<gene>
    <name type="ordered locus">FPV012</name>
</gene>
<keyword id="KW-0040">ANK repeat</keyword>
<keyword id="KW-1185">Reference proteome</keyword>
<keyword id="KW-0677">Repeat</keyword>
<organism>
    <name type="scientific">Fowlpox virus (strain NVSL)</name>
    <name type="common">FPV</name>
    <dbReference type="NCBI Taxonomy" id="928301"/>
    <lineage>
        <taxon>Viruses</taxon>
        <taxon>Varidnaviria</taxon>
        <taxon>Bamfordvirae</taxon>
        <taxon>Nucleocytoviricota</taxon>
        <taxon>Pokkesviricetes</taxon>
        <taxon>Chitovirales</taxon>
        <taxon>Poxviridae</taxon>
        <taxon>Chordopoxvirinae</taxon>
        <taxon>Avipoxvirus</taxon>
        <taxon>Fowlpox virus</taxon>
    </lineage>
</organism>
<dbReference type="EMBL" id="AF198100">
    <property type="protein sequence ID" value="AAF44356.1"/>
    <property type="molecule type" value="Genomic_DNA"/>
</dbReference>
<dbReference type="RefSeq" id="NP_038975.1">
    <property type="nucleotide sequence ID" value="NC_002188.1"/>
</dbReference>
<dbReference type="SMR" id="Q9J5I9"/>
<dbReference type="GeneID" id="1486731"/>
<dbReference type="KEGG" id="vg:1486731"/>
<dbReference type="Proteomes" id="UP000008597">
    <property type="component" value="Segment"/>
</dbReference>
<dbReference type="Gene3D" id="1.25.40.20">
    <property type="entry name" value="Ankyrin repeat-containing domain"/>
    <property type="match status" value="1"/>
</dbReference>
<dbReference type="InterPro" id="IPR052801">
    <property type="entry name" value="Ankyrin-EF-hand"/>
</dbReference>
<dbReference type="InterPro" id="IPR002110">
    <property type="entry name" value="Ankyrin_rpt"/>
</dbReference>
<dbReference type="InterPro" id="IPR036770">
    <property type="entry name" value="Ankyrin_rpt-contain_sf"/>
</dbReference>
<dbReference type="InterPro" id="IPR018272">
    <property type="entry name" value="PRANC_domain"/>
</dbReference>
<dbReference type="PANTHER" id="PTHR24127">
    <property type="entry name" value="ANKYRIN REPEAT AND EF-HAND DOMAIN-CONTAINING PROTEIN 1"/>
    <property type="match status" value="1"/>
</dbReference>
<dbReference type="PANTHER" id="PTHR24127:SF1">
    <property type="entry name" value="ANKYRIN REPEAT AND EF-HAND DOMAIN-CONTAINING PROTEIN 1"/>
    <property type="match status" value="1"/>
</dbReference>
<dbReference type="Pfam" id="PF12796">
    <property type="entry name" value="Ank_2"/>
    <property type="match status" value="1"/>
</dbReference>
<dbReference type="Pfam" id="PF09372">
    <property type="entry name" value="PRANC"/>
    <property type="match status" value="1"/>
</dbReference>
<dbReference type="PRINTS" id="PR01415">
    <property type="entry name" value="ANKYRIN"/>
</dbReference>
<dbReference type="SMART" id="SM00248">
    <property type="entry name" value="ANK"/>
    <property type="match status" value="4"/>
</dbReference>
<dbReference type="SUPFAM" id="SSF48403">
    <property type="entry name" value="Ankyrin repeat"/>
    <property type="match status" value="1"/>
</dbReference>
<dbReference type="PROSITE" id="PS50297">
    <property type="entry name" value="ANK_REP_REGION"/>
    <property type="match status" value="1"/>
</dbReference>
<dbReference type="PROSITE" id="PS50088">
    <property type="entry name" value="ANK_REPEAT"/>
    <property type="match status" value="2"/>
</dbReference>